<accession>Q5XLD3</accession>
<accession>Q45EW9</accession>
<proteinExistence type="evidence at transcript level"/>
<name>KCRM_PIG</name>
<comment type="function">
    <text evidence="1">Reversibly catalyzes the transfer of phosphate between ATP and various phosphogens (e.g. creatine phosphate). Creatine kinase isoenzymes play a central role in energy transduction in tissues with large, fluctuating energy demands, such as skeletal muscle, heart, brain and spermatozoa.</text>
</comment>
<comment type="catalytic activity">
    <reaction evidence="1 7">
        <text>creatine + ATP = N-phosphocreatine + ADP + H(+)</text>
        <dbReference type="Rhea" id="RHEA:17157"/>
        <dbReference type="ChEBI" id="CHEBI:15378"/>
        <dbReference type="ChEBI" id="CHEBI:30616"/>
        <dbReference type="ChEBI" id="CHEBI:57947"/>
        <dbReference type="ChEBI" id="CHEBI:58092"/>
        <dbReference type="ChEBI" id="CHEBI:456216"/>
        <dbReference type="EC" id="2.7.3.2"/>
    </reaction>
</comment>
<comment type="subunit">
    <text evidence="4">Dimer of identical or non-identical chains, which can be either B (brain type) or M (muscle type). With MM being the major form in skeletal muscle and myocardium, MB existing in myocardium, and BB existing in many tissues, especially brain.</text>
</comment>
<comment type="similarity">
    <text evidence="5 6">Belongs to the ATP:guanido phosphotransferase family.</text>
</comment>
<keyword id="KW-0067">ATP-binding</keyword>
<keyword id="KW-0418">Kinase</keyword>
<keyword id="KW-0547">Nucleotide-binding</keyword>
<keyword id="KW-0597">Phosphoprotein</keyword>
<keyword id="KW-1185">Reference proteome</keyword>
<keyword id="KW-0808">Transferase</keyword>
<protein>
    <recommendedName>
        <fullName>Creatine kinase M-type</fullName>
        <ecNumber evidence="1">2.7.3.2</ecNumber>
    </recommendedName>
    <alternativeName>
        <fullName>Creatine kinase M chain</fullName>
    </alternativeName>
    <alternativeName>
        <fullName>Creatine phosphokinase M-type</fullName>
        <shortName>CPK-M</shortName>
    </alternativeName>
    <alternativeName>
        <fullName>M-CK</fullName>
    </alternativeName>
</protein>
<dbReference type="EC" id="2.7.3.2" evidence="1"/>
<dbReference type="EMBL" id="AY754869">
    <property type="protein sequence ID" value="AAV28621.1"/>
    <property type="molecule type" value="mRNA"/>
</dbReference>
<dbReference type="EMBL" id="DQ153192">
    <property type="protein sequence ID" value="AAZ66747.1"/>
    <property type="molecule type" value="Genomic_DNA"/>
</dbReference>
<dbReference type="RefSeq" id="NP_001123421.1">
    <property type="nucleotide sequence ID" value="NM_001129949.1"/>
</dbReference>
<dbReference type="SMR" id="Q5XLD3"/>
<dbReference type="FunCoup" id="Q5XLD3">
    <property type="interactions" value="918"/>
</dbReference>
<dbReference type="STRING" id="9823.ENSSSCP00000070358"/>
<dbReference type="PaxDb" id="9823-ENSSSCP00000021419"/>
<dbReference type="PeptideAtlas" id="Q5XLD3"/>
<dbReference type="Ensembl" id="ENSSSCT00015008842.1">
    <property type="protein sequence ID" value="ENSSSCP00015003563.1"/>
    <property type="gene ID" value="ENSSSCG00015006617.1"/>
</dbReference>
<dbReference type="Ensembl" id="ENSSSCT00025061951.1">
    <property type="protein sequence ID" value="ENSSSCP00025026305.1"/>
    <property type="gene ID" value="ENSSSCG00025045630.1"/>
</dbReference>
<dbReference type="Ensembl" id="ENSSSCT00030083879.1">
    <property type="protein sequence ID" value="ENSSSCP00030038539.1"/>
    <property type="gene ID" value="ENSSSCG00030060031.1"/>
</dbReference>
<dbReference type="Ensembl" id="ENSSSCT00030084010.1">
    <property type="protein sequence ID" value="ENSSSCP00030038619.1"/>
    <property type="gene ID" value="ENSSSCG00030060031.1"/>
</dbReference>
<dbReference type="Ensembl" id="ENSSSCT00035093171.1">
    <property type="protein sequence ID" value="ENSSSCP00035039116.1"/>
    <property type="gene ID" value="ENSSSCG00035068926.1"/>
</dbReference>
<dbReference type="Ensembl" id="ENSSSCT00040083461.1">
    <property type="protein sequence ID" value="ENSSSCP00040036371.1"/>
    <property type="gene ID" value="ENSSSCG00040061159.1"/>
</dbReference>
<dbReference type="Ensembl" id="ENSSSCT00045063279.1">
    <property type="protein sequence ID" value="ENSSSCP00045044615.1"/>
    <property type="gene ID" value="ENSSSCG00045036676.1"/>
</dbReference>
<dbReference type="Ensembl" id="ENSSSCT00055022694.1">
    <property type="protein sequence ID" value="ENSSSCP00055017951.1"/>
    <property type="gene ID" value="ENSSSCG00055011557.1"/>
</dbReference>
<dbReference type="Ensembl" id="ENSSSCT00060036770.1">
    <property type="protein sequence ID" value="ENSSSCP00060015654.1"/>
    <property type="gene ID" value="ENSSSCG00060027142.1"/>
</dbReference>
<dbReference type="Ensembl" id="ENSSSCT00065002071.1">
    <property type="protein sequence ID" value="ENSSSCP00065000672.1"/>
    <property type="gene ID" value="ENSSSCG00065001659.1"/>
</dbReference>
<dbReference type="Ensembl" id="ENSSSCT00070056778.1">
    <property type="protein sequence ID" value="ENSSSCP00070048238.1"/>
    <property type="gene ID" value="ENSSSCG00070028309.1"/>
</dbReference>
<dbReference type="Ensembl" id="ENSSSCT00105078600">
    <property type="protein sequence ID" value="ENSSSCP00105055648"/>
    <property type="gene ID" value="ENSSSCG00105041212"/>
</dbReference>
<dbReference type="Ensembl" id="ENSSSCT00110065327">
    <property type="protein sequence ID" value="ENSSSCP00110045959"/>
    <property type="gene ID" value="ENSSSCG00110034305"/>
</dbReference>
<dbReference type="Ensembl" id="ENSSSCT00115029938">
    <property type="protein sequence ID" value="ENSSSCP00115028440"/>
    <property type="gene ID" value="ENSSSCG00115017039"/>
</dbReference>
<dbReference type="GeneID" id="397264"/>
<dbReference type="KEGG" id="ssc:397264"/>
<dbReference type="CTD" id="1158"/>
<dbReference type="eggNOG" id="KOG3581">
    <property type="taxonomic scope" value="Eukaryota"/>
</dbReference>
<dbReference type="InParanoid" id="Q5XLD3"/>
<dbReference type="OrthoDB" id="430219at2759"/>
<dbReference type="Reactome" id="R-SSC-71288">
    <property type="pathway name" value="Creatine metabolism"/>
</dbReference>
<dbReference type="Proteomes" id="UP000008227">
    <property type="component" value="Unplaced"/>
</dbReference>
<dbReference type="Proteomes" id="UP000314985">
    <property type="component" value="Chromosome 6"/>
</dbReference>
<dbReference type="Proteomes" id="UP000694570">
    <property type="component" value="Unplaced"/>
</dbReference>
<dbReference type="Proteomes" id="UP000694571">
    <property type="component" value="Unplaced"/>
</dbReference>
<dbReference type="Proteomes" id="UP000694720">
    <property type="component" value="Unplaced"/>
</dbReference>
<dbReference type="Proteomes" id="UP000694722">
    <property type="component" value="Unplaced"/>
</dbReference>
<dbReference type="Proteomes" id="UP000694723">
    <property type="component" value="Unplaced"/>
</dbReference>
<dbReference type="Proteomes" id="UP000694724">
    <property type="component" value="Unplaced"/>
</dbReference>
<dbReference type="Proteomes" id="UP000694725">
    <property type="component" value="Unplaced"/>
</dbReference>
<dbReference type="Proteomes" id="UP000694726">
    <property type="component" value="Unplaced"/>
</dbReference>
<dbReference type="Proteomes" id="UP000694727">
    <property type="component" value="Unplaced"/>
</dbReference>
<dbReference type="Proteomes" id="UP000694728">
    <property type="component" value="Unplaced"/>
</dbReference>
<dbReference type="GO" id="GO:0005615">
    <property type="term" value="C:extracellular space"/>
    <property type="evidence" value="ECO:0000250"/>
    <property type="project" value="AgBase"/>
</dbReference>
<dbReference type="GO" id="GO:0005524">
    <property type="term" value="F:ATP binding"/>
    <property type="evidence" value="ECO:0007669"/>
    <property type="project" value="UniProtKB-KW"/>
</dbReference>
<dbReference type="GO" id="GO:0004111">
    <property type="term" value="F:creatine kinase activity"/>
    <property type="evidence" value="ECO:0000250"/>
    <property type="project" value="AgBase"/>
</dbReference>
<dbReference type="GO" id="GO:0046314">
    <property type="term" value="P:phosphocreatine biosynthetic process"/>
    <property type="evidence" value="ECO:0000318"/>
    <property type="project" value="GO_Central"/>
</dbReference>
<dbReference type="GO" id="GO:0009408">
    <property type="term" value="P:response to heat"/>
    <property type="evidence" value="ECO:0000250"/>
    <property type="project" value="AgBase"/>
</dbReference>
<dbReference type="CDD" id="cd00716">
    <property type="entry name" value="creatine_kinase_like"/>
    <property type="match status" value="1"/>
</dbReference>
<dbReference type="FunFam" id="3.30.590.10:FF:000026">
    <property type="entry name" value="Creatine kinase B-type"/>
    <property type="match status" value="1"/>
</dbReference>
<dbReference type="FunFam" id="1.10.135.10:FF:000001">
    <property type="entry name" value="Creatine kinase M-type"/>
    <property type="match status" value="1"/>
</dbReference>
<dbReference type="Gene3D" id="1.10.135.10">
    <property type="entry name" value="ATP:guanido phosphotransferase, N-terminal domain"/>
    <property type="match status" value="1"/>
</dbReference>
<dbReference type="Gene3D" id="3.30.590.10">
    <property type="entry name" value="Glutamine synthetase/guanido kinase, catalytic domain"/>
    <property type="match status" value="1"/>
</dbReference>
<dbReference type="InterPro" id="IPR000749">
    <property type="entry name" value="ATP-guanido_PTrfase"/>
</dbReference>
<dbReference type="InterPro" id="IPR022415">
    <property type="entry name" value="ATP-guanido_PTrfase_AS"/>
</dbReference>
<dbReference type="InterPro" id="IPR022414">
    <property type="entry name" value="ATP-guanido_PTrfase_cat"/>
</dbReference>
<dbReference type="InterPro" id="IPR022413">
    <property type="entry name" value="ATP-guanido_PTrfase_N"/>
</dbReference>
<dbReference type="InterPro" id="IPR036802">
    <property type="entry name" value="ATP-guanido_PTrfase_N_sf"/>
</dbReference>
<dbReference type="InterPro" id="IPR014746">
    <property type="entry name" value="Gln_synth/guanido_kin_cat_dom"/>
</dbReference>
<dbReference type="PANTHER" id="PTHR11547">
    <property type="entry name" value="ARGININE OR CREATINE KINASE"/>
    <property type="match status" value="1"/>
</dbReference>
<dbReference type="PANTHER" id="PTHR11547:SF63">
    <property type="entry name" value="CREATINE KINASE M-TYPE"/>
    <property type="match status" value="1"/>
</dbReference>
<dbReference type="Pfam" id="PF00217">
    <property type="entry name" value="ATP-gua_Ptrans"/>
    <property type="match status" value="1"/>
</dbReference>
<dbReference type="Pfam" id="PF02807">
    <property type="entry name" value="ATP-gua_PtransN"/>
    <property type="match status" value="1"/>
</dbReference>
<dbReference type="SUPFAM" id="SSF55931">
    <property type="entry name" value="Glutamine synthetase/guanido kinase"/>
    <property type="match status" value="1"/>
</dbReference>
<dbReference type="SUPFAM" id="SSF48034">
    <property type="entry name" value="Guanido kinase N-terminal domain"/>
    <property type="match status" value="1"/>
</dbReference>
<dbReference type="PROSITE" id="PS00112">
    <property type="entry name" value="PHOSPHAGEN_KINASE"/>
    <property type="match status" value="1"/>
</dbReference>
<dbReference type="PROSITE" id="PS51510">
    <property type="entry name" value="PHOSPHAGEN_KINASE_C"/>
    <property type="match status" value="1"/>
</dbReference>
<dbReference type="PROSITE" id="PS51509">
    <property type="entry name" value="PHOSPHAGEN_KINASE_N"/>
    <property type="match status" value="1"/>
</dbReference>
<sequence>MPFGNTHNKYKLNFKAEEEYPDLSKHNNHMAKALTLEIYKKLRDKETPSGFTLDDVIQTGVDNPGHPFIMTVGCVAGDEESYVVFKDLFDPIIQDRHGGYKPTDKHKTDLNHENLKGGDDLDPNYVLSSRVRTGRSIKGYTLPPHCSRGERRAVEKLSVEALNSLTGEFKGKYYPLKSMTEQEQQQLIDDHFLFDKPVSPLLLASGMARDWPDARGIWHNDNKSFLVWVNEEDHLRVISMEKGGNMKEVFRRFCVGLQKIEEIFKKAGHPFMWNEHLGYVLTCPSNLGTGLRGGVHVKLAHLSKHPKFEEILTRLRLQKRGTGGVDTAAVGSVFDVSNADRLGSSEVEQVQLVVDGVKLMVEMEKKLEKGQSIDDMIPAQK</sequence>
<gene>
    <name type="primary">CKM</name>
</gene>
<evidence type="ECO:0000250" key="1">
    <source>
        <dbReference type="UniProtKB" id="P00563"/>
    </source>
</evidence>
<evidence type="ECO:0000250" key="2">
    <source>
        <dbReference type="UniProtKB" id="P00564"/>
    </source>
</evidence>
<evidence type="ECO:0000250" key="3">
    <source>
        <dbReference type="UniProtKB" id="P07310"/>
    </source>
</evidence>
<evidence type="ECO:0000250" key="4">
    <source>
        <dbReference type="UniProtKB" id="P12277"/>
    </source>
</evidence>
<evidence type="ECO:0000255" key="5">
    <source>
        <dbReference type="PROSITE-ProRule" id="PRU00842"/>
    </source>
</evidence>
<evidence type="ECO:0000255" key="6">
    <source>
        <dbReference type="PROSITE-ProRule" id="PRU00843"/>
    </source>
</evidence>
<evidence type="ECO:0000255" key="7">
    <source>
        <dbReference type="PROSITE-ProRule" id="PRU10029"/>
    </source>
</evidence>
<feature type="chain" id="PRO_0000211977" description="Creatine kinase M-type">
    <location>
        <begin position="1"/>
        <end position="381"/>
    </location>
</feature>
<feature type="domain" description="Phosphagen kinase N-terminal" evidence="5">
    <location>
        <begin position="11"/>
        <end position="98"/>
    </location>
</feature>
<feature type="domain" description="Phosphagen kinase C-terminal" evidence="6">
    <location>
        <begin position="125"/>
        <end position="367"/>
    </location>
</feature>
<feature type="binding site" evidence="6">
    <location>
        <begin position="128"/>
        <end position="132"/>
    </location>
    <ligand>
        <name>ATP</name>
        <dbReference type="ChEBI" id="CHEBI:30616"/>
    </ligand>
</feature>
<feature type="binding site" evidence="6">
    <location>
        <position position="191"/>
    </location>
    <ligand>
        <name>ATP</name>
        <dbReference type="ChEBI" id="CHEBI:30616"/>
    </ligand>
</feature>
<feature type="binding site" evidence="6">
    <location>
        <position position="236"/>
    </location>
    <ligand>
        <name>ATP</name>
        <dbReference type="ChEBI" id="CHEBI:30616"/>
    </ligand>
</feature>
<feature type="binding site" evidence="6">
    <location>
        <position position="292"/>
    </location>
    <ligand>
        <name>ATP</name>
        <dbReference type="ChEBI" id="CHEBI:30616"/>
    </ligand>
</feature>
<feature type="binding site" evidence="6">
    <location>
        <begin position="320"/>
        <end position="325"/>
    </location>
    <ligand>
        <name>ATP</name>
        <dbReference type="ChEBI" id="CHEBI:30616"/>
    </ligand>
</feature>
<feature type="binding site" evidence="6">
    <location>
        <position position="335"/>
    </location>
    <ligand>
        <name>ATP</name>
        <dbReference type="ChEBI" id="CHEBI:30616"/>
    </ligand>
</feature>
<feature type="modified residue" description="Phosphoserine" evidence="3">
    <location>
        <position position="164"/>
    </location>
</feature>
<feature type="modified residue" description="Phosphothreonine" evidence="2">
    <location>
        <position position="166"/>
    </location>
</feature>
<feature type="modified residue" description="Phosphoserine" evidence="2">
    <location>
        <position position="178"/>
    </location>
</feature>
<feature type="modified residue" description="Phosphothreonine" evidence="2">
    <location>
        <position position="180"/>
    </location>
</feature>
<feature type="modified residue" description="Phosphoserine" evidence="3">
    <location>
        <position position="199"/>
    </location>
</feature>
<feature type="modified residue" description="Phosphothreonine" evidence="2">
    <location>
        <position position="313"/>
    </location>
</feature>
<feature type="modified residue" description="Phosphothreonine" evidence="3">
    <location>
        <position position="322"/>
    </location>
</feature>
<feature type="modified residue" description="Phosphoserine" evidence="3">
    <location>
        <position position="372"/>
    </location>
</feature>
<organism>
    <name type="scientific">Sus scrofa</name>
    <name type="common">Pig</name>
    <dbReference type="NCBI Taxonomy" id="9823"/>
    <lineage>
        <taxon>Eukaryota</taxon>
        <taxon>Metazoa</taxon>
        <taxon>Chordata</taxon>
        <taxon>Craniata</taxon>
        <taxon>Vertebrata</taxon>
        <taxon>Euteleostomi</taxon>
        <taxon>Mammalia</taxon>
        <taxon>Eutheria</taxon>
        <taxon>Laurasiatheria</taxon>
        <taxon>Artiodactyla</taxon>
        <taxon>Suina</taxon>
        <taxon>Suidae</taxon>
        <taxon>Sus</taxon>
    </lineage>
</organism>
<reference key="1">
    <citation type="submission" date="2004-09" db="EMBL/GenBank/DDBJ databases">
        <title>Molecular cloning and characterization of porcine CKM.</title>
        <authorList>
            <person name="Xu D.Q."/>
            <person name="Xiong Y.Z."/>
            <person name="Ling X.F."/>
            <person name="Lang J."/>
        </authorList>
    </citation>
    <scope>NUCLEOTIDE SEQUENCE [MRNA]</scope>
    <source>
        <tissue>Skeletal muscle</tissue>
    </source>
</reference>
<reference key="2">
    <citation type="submission" date="2005-08" db="EMBL/GenBank/DDBJ databases">
        <title>Cloning and sequence analysis of genomic structure and the proximal promoter region of porcine CKM gene.</title>
        <authorList>
            <person name="Ling X.F."/>
            <person name="Xiong Y.Z."/>
            <person name="Xu D.Q."/>
        </authorList>
    </citation>
    <scope>NUCLEOTIDE SEQUENCE [GENOMIC DNA]</scope>
</reference>